<name>RUVB_SALTO</name>
<feature type="chain" id="PRO_1000074099" description="Holliday junction branch migration complex subunit RuvB">
    <location>
        <begin position="1"/>
        <end position="354"/>
    </location>
</feature>
<feature type="region of interest" description="Large ATPase domain (RuvB-L)" evidence="1">
    <location>
        <begin position="1"/>
        <end position="183"/>
    </location>
</feature>
<feature type="region of interest" description="Small ATPAse domain (RuvB-S)" evidence="1">
    <location>
        <begin position="184"/>
        <end position="254"/>
    </location>
</feature>
<feature type="region of interest" description="Head domain (RuvB-H)" evidence="1">
    <location>
        <begin position="257"/>
        <end position="354"/>
    </location>
</feature>
<feature type="binding site" evidence="1">
    <location>
        <position position="23"/>
    </location>
    <ligand>
        <name>ATP</name>
        <dbReference type="ChEBI" id="CHEBI:30616"/>
    </ligand>
</feature>
<feature type="binding site" evidence="1">
    <location>
        <position position="64"/>
    </location>
    <ligand>
        <name>ATP</name>
        <dbReference type="ChEBI" id="CHEBI:30616"/>
    </ligand>
</feature>
<feature type="binding site" evidence="1">
    <location>
        <position position="67"/>
    </location>
    <ligand>
        <name>ATP</name>
        <dbReference type="ChEBI" id="CHEBI:30616"/>
    </ligand>
</feature>
<feature type="binding site" evidence="1">
    <location>
        <position position="68"/>
    </location>
    <ligand>
        <name>ATP</name>
        <dbReference type="ChEBI" id="CHEBI:30616"/>
    </ligand>
</feature>
<feature type="binding site" evidence="1">
    <location>
        <position position="68"/>
    </location>
    <ligand>
        <name>Mg(2+)</name>
        <dbReference type="ChEBI" id="CHEBI:18420"/>
    </ligand>
</feature>
<feature type="binding site" evidence="1">
    <location>
        <position position="69"/>
    </location>
    <ligand>
        <name>ATP</name>
        <dbReference type="ChEBI" id="CHEBI:30616"/>
    </ligand>
</feature>
<feature type="binding site" evidence="1">
    <location>
        <begin position="130"/>
        <end position="132"/>
    </location>
    <ligand>
        <name>ATP</name>
        <dbReference type="ChEBI" id="CHEBI:30616"/>
    </ligand>
</feature>
<feature type="binding site" evidence="1">
    <location>
        <position position="173"/>
    </location>
    <ligand>
        <name>ATP</name>
        <dbReference type="ChEBI" id="CHEBI:30616"/>
    </ligand>
</feature>
<feature type="binding site" evidence="1">
    <location>
        <position position="183"/>
    </location>
    <ligand>
        <name>ATP</name>
        <dbReference type="ChEBI" id="CHEBI:30616"/>
    </ligand>
</feature>
<feature type="binding site" evidence="1">
    <location>
        <position position="220"/>
    </location>
    <ligand>
        <name>ATP</name>
        <dbReference type="ChEBI" id="CHEBI:30616"/>
    </ligand>
</feature>
<feature type="binding site" evidence="1">
    <location>
        <position position="312"/>
    </location>
    <ligand>
        <name>DNA</name>
        <dbReference type="ChEBI" id="CHEBI:16991"/>
    </ligand>
</feature>
<feature type="binding site" evidence="1">
    <location>
        <position position="317"/>
    </location>
    <ligand>
        <name>DNA</name>
        <dbReference type="ChEBI" id="CHEBI:16991"/>
    </ligand>
</feature>
<protein>
    <recommendedName>
        <fullName evidence="1">Holliday junction branch migration complex subunit RuvB</fullName>
        <ecNumber evidence="1">3.6.4.-</ecNumber>
    </recommendedName>
</protein>
<evidence type="ECO:0000255" key="1">
    <source>
        <dbReference type="HAMAP-Rule" id="MF_00016"/>
    </source>
</evidence>
<keyword id="KW-0067">ATP-binding</keyword>
<keyword id="KW-0963">Cytoplasm</keyword>
<keyword id="KW-0227">DNA damage</keyword>
<keyword id="KW-0233">DNA recombination</keyword>
<keyword id="KW-0234">DNA repair</keyword>
<keyword id="KW-0238">DNA-binding</keyword>
<keyword id="KW-0378">Hydrolase</keyword>
<keyword id="KW-0547">Nucleotide-binding</keyword>
<keyword id="KW-1185">Reference proteome</keyword>
<gene>
    <name evidence="1" type="primary">ruvB</name>
    <name type="ordered locus">Strop_1810</name>
</gene>
<reference key="1">
    <citation type="journal article" date="2007" name="Proc. Natl. Acad. Sci. U.S.A.">
        <title>Genome sequencing reveals complex secondary metabolome in the marine actinomycete Salinispora tropica.</title>
        <authorList>
            <person name="Udwary D.W."/>
            <person name="Zeigler L."/>
            <person name="Asolkar R.N."/>
            <person name="Singan V."/>
            <person name="Lapidus A."/>
            <person name="Fenical W."/>
            <person name="Jensen P.R."/>
            <person name="Moore B.S."/>
        </authorList>
    </citation>
    <scope>NUCLEOTIDE SEQUENCE [LARGE SCALE GENOMIC DNA]</scope>
    <source>
        <strain>ATCC BAA-916 / DSM 44818 / JCM 13857 / NBRC 105044 / CNB-440</strain>
    </source>
</reference>
<organism>
    <name type="scientific">Salinispora tropica (strain ATCC BAA-916 / DSM 44818 / JCM 13857 / NBRC 105044 / CNB-440)</name>
    <dbReference type="NCBI Taxonomy" id="369723"/>
    <lineage>
        <taxon>Bacteria</taxon>
        <taxon>Bacillati</taxon>
        <taxon>Actinomycetota</taxon>
        <taxon>Actinomycetes</taxon>
        <taxon>Micromonosporales</taxon>
        <taxon>Micromonosporaceae</taxon>
        <taxon>Salinispora</taxon>
    </lineage>
</organism>
<sequence length="354" mass="37739">MTGDNLVSAYVSDAERDVEASVRPRRLAEFIAQERVRDQLDLLLQGALRRGSPPDHILLSGPPGLGKTSLANIVAAELGTSIRVTSGPAIERSGDLAAILTSLGEGDVLFIDEVHRIARPAEELLYSAMEDFRVDVVVGKGPGATAIPLDVEPFTLVGATTRAGLLTGPMRDRFGFVAHLDFYSPADLETLLNRSARILGVPITADGAAEISGRARGTPRIANRLLRRVRDFAEVRADGVVTRETAQAALTVYDVDALGLDRLDRAVLTALVDLFRGGPVGLSTLAVAVGEQPDTVEEVCEPFLVRAGLLARTPRGRVATEAAWHHLGRTPANGTFGPDVPPARDLFSVEPDQP</sequence>
<dbReference type="EC" id="3.6.4.-" evidence="1"/>
<dbReference type="EMBL" id="CP000667">
    <property type="protein sequence ID" value="ABP54273.1"/>
    <property type="molecule type" value="Genomic_DNA"/>
</dbReference>
<dbReference type="RefSeq" id="WP_011905704.1">
    <property type="nucleotide sequence ID" value="NC_009380.1"/>
</dbReference>
<dbReference type="SMR" id="A4X5X3"/>
<dbReference type="STRING" id="369723.Strop_1810"/>
<dbReference type="KEGG" id="stp:Strop_1810"/>
<dbReference type="PATRIC" id="fig|369723.5.peg.1858"/>
<dbReference type="eggNOG" id="COG2255">
    <property type="taxonomic scope" value="Bacteria"/>
</dbReference>
<dbReference type="HOGENOM" id="CLU_055599_1_0_11"/>
<dbReference type="Proteomes" id="UP000000235">
    <property type="component" value="Chromosome"/>
</dbReference>
<dbReference type="GO" id="GO:0005737">
    <property type="term" value="C:cytoplasm"/>
    <property type="evidence" value="ECO:0007669"/>
    <property type="project" value="UniProtKB-SubCell"/>
</dbReference>
<dbReference type="GO" id="GO:0048476">
    <property type="term" value="C:Holliday junction resolvase complex"/>
    <property type="evidence" value="ECO:0007669"/>
    <property type="project" value="UniProtKB-UniRule"/>
</dbReference>
<dbReference type="GO" id="GO:0005524">
    <property type="term" value="F:ATP binding"/>
    <property type="evidence" value="ECO:0007669"/>
    <property type="project" value="UniProtKB-UniRule"/>
</dbReference>
<dbReference type="GO" id="GO:0016887">
    <property type="term" value="F:ATP hydrolysis activity"/>
    <property type="evidence" value="ECO:0007669"/>
    <property type="project" value="InterPro"/>
</dbReference>
<dbReference type="GO" id="GO:0000400">
    <property type="term" value="F:four-way junction DNA binding"/>
    <property type="evidence" value="ECO:0007669"/>
    <property type="project" value="UniProtKB-UniRule"/>
</dbReference>
<dbReference type="GO" id="GO:0009378">
    <property type="term" value="F:four-way junction helicase activity"/>
    <property type="evidence" value="ECO:0007669"/>
    <property type="project" value="InterPro"/>
</dbReference>
<dbReference type="GO" id="GO:0006310">
    <property type="term" value="P:DNA recombination"/>
    <property type="evidence" value="ECO:0007669"/>
    <property type="project" value="UniProtKB-UniRule"/>
</dbReference>
<dbReference type="GO" id="GO:0006281">
    <property type="term" value="P:DNA repair"/>
    <property type="evidence" value="ECO:0007669"/>
    <property type="project" value="UniProtKB-UniRule"/>
</dbReference>
<dbReference type="CDD" id="cd00009">
    <property type="entry name" value="AAA"/>
    <property type="match status" value="1"/>
</dbReference>
<dbReference type="Gene3D" id="1.10.8.60">
    <property type="match status" value="1"/>
</dbReference>
<dbReference type="Gene3D" id="3.40.50.300">
    <property type="entry name" value="P-loop containing nucleotide triphosphate hydrolases"/>
    <property type="match status" value="1"/>
</dbReference>
<dbReference type="Gene3D" id="1.10.10.10">
    <property type="entry name" value="Winged helix-like DNA-binding domain superfamily/Winged helix DNA-binding domain"/>
    <property type="match status" value="1"/>
</dbReference>
<dbReference type="HAMAP" id="MF_00016">
    <property type="entry name" value="DNA_HJ_migration_RuvB"/>
    <property type="match status" value="1"/>
</dbReference>
<dbReference type="InterPro" id="IPR003593">
    <property type="entry name" value="AAA+_ATPase"/>
</dbReference>
<dbReference type="InterPro" id="IPR041445">
    <property type="entry name" value="AAA_lid_4"/>
</dbReference>
<dbReference type="InterPro" id="IPR004605">
    <property type="entry name" value="DNA_helicase_Holl-junc_RuvB"/>
</dbReference>
<dbReference type="InterPro" id="IPR027417">
    <property type="entry name" value="P-loop_NTPase"/>
</dbReference>
<dbReference type="InterPro" id="IPR008824">
    <property type="entry name" value="RuvB-like_N"/>
</dbReference>
<dbReference type="InterPro" id="IPR008823">
    <property type="entry name" value="RuvB_C"/>
</dbReference>
<dbReference type="InterPro" id="IPR036388">
    <property type="entry name" value="WH-like_DNA-bd_sf"/>
</dbReference>
<dbReference type="InterPro" id="IPR036390">
    <property type="entry name" value="WH_DNA-bd_sf"/>
</dbReference>
<dbReference type="NCBIfam" id="NF000868">
    <property type="entry name" value="PRK00080.1"/>
    <property type="match status" value="1"/>
</dbReference>
<dbReference type="NCBIfam" id="TIGR00635">
    <property type="entry name" value="ruvB"/>
    <property type="match status" value="1"/>
</dbReference>
<dbReference type="PANTHER" id="PTHR42848">
    <property type="match status" value="1"/>
</dbReference>
<dbReference type="PANTHER" id="PTHR42848:SF1">
    <property type="entry name" value="HOLLIDAY JUNCTION BRANCH MIGRATION COMPLEX SUBUNIT RUVB"/>
    <property type="match status" value="1"/>
</dbReference>
<dbReference type="Pfam" id="PF17864">
    <property type="entry name" value="AAA_lid_4"/>
    <property type="match status" value="1"/>
</dbReference>
<dbReference type="Pfam" id="PF05491">
    <property type="entry name" value="RuvB_C"/>
    <property type="match status" value="1"/>
</dbReference>
<dbReference type="Pfam" id="PF05496">
    <property type="entry name" value="RuvB_N"/>
    <property type="match status" value="1"/>
</dbReference>
<dbReference type="SMART" id="SM00382">
    <property type="entry name" value="AAA"/>
    <property type="match status" value="1"/>
</dbReference>
<dbReference type="SUPFAM" id="SSF52540">
    <property type="entry name" value="P-loop containing nucleoside triphosphate hydrolases"/>
    <property type="match status" value="1"/>
</dbReference>
<dbReference type="SUPFAM" id="SSF46785">
    <property type="entry name" value="Winged helix' DNA-binding domain"/>
    <property type="match status" value="1"/>
</dbReference>
<proteinExistence type="inferred from homology"/>
<comment type="function">
    <text evidence="1">The RuvA-RuvB-RuvC complex processes Holliday junction (HJ) DNA during genetic recombination and DNA repair, while the RuvA-RuvB complex plays an important role in the rescue of blocked DNA replication forks via replication fork reversal (RFR). RuvA specifically binds to HJ cruciform DNA, conferring on it an open structure. The RuvB hexamer acts as an ATP-dependent pump, pulling dsDNA into and through the RuvAB complex. RuvB forms 2 homohexamers on either side of HJ DNA bound by 1 or 2 RuvA tetramers; 4 subunits per hexamer contact DNA at a time. Coordinated motions by a converter formed by DNA-disengaged RuvB subunits stimulates ATP hydrolysis and nucleotide exchange. Immobilization of the converter enables RuvB to convert the ATP-contained energy into a lever motion, pulling 2 nucleotides of DNA out of the RuvA tetramer per ATP hydrolyzed, thus driving DNA branch migration. The RuvB motors rotate together with the DNA substrate, which together with the progressing nucleotide cycle form the mechanistic basis for DNA recombination by continuous HJ branch migration. Branch migration allows RuvC to scan DNA until it finds its consensus sequence, where it cleaves and resolves cruciform DNA.</text>
</comment>
<comment type="catalytic activity">
    <reaction evidence="1">
        <text>ATP + H2O = ADP + phosphate + H(+)</text>
        <dbReference type="Rhea" id="RHEA:13065"/>
        <dbReference type="ChEBI" id="CHEBI:15377"/>
        <dbReference type="ChEBI" id="CHEBI:15378"/>
        <dbReference type="ChEBI" id="CHEBI:30616"/>
        <dbReference type="ChEBI" id="CHEBI:43474"/>
        <dbReference type="ChEBI" id="CHEBI:456216"/>
    </reaction>
</comment>
<comment type="subunit">
    <text evidence="1">Homohexamer. Forms an RuvA(8)-RuvB(12)-Holliday junction (HJ) complex. HJ DNA is sandwiched between 2 RuvA tetramers; dsDNA enters through RuvA and exits via RuvB. An RuvB hexamer assembles on each DNA strand where it exits the tetramer. Each RuvB hexamer is contacted by two RuvA subunits (via domain III) on 2 adjacent RuvB subunits; this complex drives branch migration. In the full resolvosome a probable DNA-RuvA(4)-RuvB(12)-RuvC(2) complex forms which resolves the HJ.</text>
</comment>
<comment type="subcellular location">
    <subcellularLocation>
        <location evidence="1">Cytoplasm</location>
    </subcellularLocation>
</comment>
<comment type="domain">
    <text evidence="1">Has 3 domains, the large (RuvB-L) and small ATPase (RuvB-S) domains and the C-terminal head (RuvB-H) domain. The head domain binds DNA, while the ATPase domains jointly bind ATP, ADP or are empty depending on the state of the subunit in the translocation cycle. During a single DNA translocation step the structure of each domain remains the same, but their relative positions change.</text>
</comment>
<comment type="similarity">
    <text evidence="1">Belongs to the RuvB family.</text>
</comment>
<accession>A4X5X3</accession>